<accession>Q58EL0</accession>
<accession>O57366</accession>
<accession>Q4PR85</accession>
<accession>Q9YGT2</accession>
<sequence length="306" mass="35169">MFNSVNLGNFCSQTRKDRTSEFGDRTGCASNIYLPSCTYYVPEFSAVSSFLPQGPSRQITYPYSTNLSQVQPVRDVSYGLDPSSKWHHRSNYASCYSGEDLVHRDCLPPSTMTEMLMKNESVYSHHHQHHPNSSHPSTGFYTGVGKNNVLPQGFDRFFETAYCSTDNQSEHCLQKSEMNKLETSSQQPTAVSAAREPEKDPEDEEEHTNSGSCTSAATKDGNASKSSHSSTPRTRKKRCPYSKFQIRELEREFFFNVYINKEKRLQLSRMLNLTDRQVKIWFQNRRMKEKKLSRDRLQYFSGNPLL</sequence>
<keyword id="KW-0217">Developmental protein</keyword>
<keyword id="KW-0238">DNA-binding</keyword>
<keyword id="KW-0371">Homeobox</keyword>
<keyword id="KW-0539">Nucleus</keyword>
<keyword id="KW-1185">Reference proteome</keyword>
<keyword id="KW-0804">Transcription</keyword>
<keyword id="KW-0805">Transcription regulation</keyword>
<proteinExistence type="evidence at transcript level"/>
<dbReference type="EMBL" id="BC091858">
    <property type="protein sequence ID" value="AAH91858.1"/>
    <property type="molecule type" value="mRNA"/>
</dbReference>
<dbReference type="EMBL" id="DQ060558">
    <property type="protein sequence ID" value="AAY67936.1"/>
    <property type="molecule type" value="mRNA"/>
</dbReference>
<dbReference type="EMBL" id="AF071258">
    <property type="protein sequence ID" value="AAD15951.1"/>
    <property type="molecule type" value="Genomic_DNA"/>
</dbReference>
<dbReference type="EMBL" id="Y14541">
    <property type="protein sequence ID" value="CAA74876.1"/>
    <property type="molecule type" value="mRNA"/>
</dbReference>
<dbReference type="RefSeq" id="NP_571240.1">
    <property type="nucleotide sequence ID" value="NM_131165.2"/>
</dbReference>
<dbReference type="SMR" id="Q58EL0"/>
<dbReference type="FunCoup" id="Q58EL0">
    <property type="interactions" value="29"/>
</dbReference>
<dbReference type="STRING" id="7955.ENSDARP00000093920"/>
<dbReference type="PaxDb" id="7955-ENSDARP00000093920"/>
<dbReference type="Ensembl" id="ENSDART00000103146">
    <property type="protein sequence ID" value="ENSDARP00000093920"/>
    <property type="gene ID" value="ENSDARG00000070351"/>
</dbReference>
<dbReference type="GeneID" id="30403"/>
<dbReference type="KEGG" id="dre:30403"/>
<dbReference type="AGR" id="ZFIN:ZDB-GENE-990415-111"/>
<dbReference type="CTD" id="30403"/>
<dbReference type="ZFIN" id="ZDB-GENE-990415-111">
    <property type="gene designation" value="hoxc11a"/>
</dbReference>
<dbReference type="eggNOG" id="KOG0487">
    <property type="taxonomic scope" value="Eukaryota"/>
</dbReference>
<dbReference type="InParanoid" id="Q58EL0"/>
<dbReference type="OMA" id="NESAYGH"/>
<dbReference type="OrthoDB" id="6159439at2759"/>
<dbReference type="PhylomeDB" id="Q58EL0"/>
<dbReference type="TreeFam" id="TF350668"/>
<dbReference type="PRO" id="PR:Q58EL0"/>
<dbReference type="Proteomes" id="UP000000437">
    <property type="component" value="Chromosome 23"/>
</dbReference>
<dbReference type="Bgee" id="ENSDARG00000070351">
    <property type="expression patterns" value="Expressed in tail bud paraxial mesoderm and 19 other cell types or tissues"/>
</dbReference>
<dbReference type="ExpressionAtlas" id="Q58EL0">
    <property type="expression patterns" value="baseline and differential"/>
</dbReference>
<dbReference type="GO" id="GO:0005654">
    <property type="term" value="C:nucleoplasm"/>
    <property type="evidence" value="ECO:0007669"/>
    <property type="project" value="UniProtKB-ARBA"/>
</dbReference>
<dbReference type="GO" id="GO:0005634">
    <property type="term" value="C:nucleus"/>
    <property type="evidence" value="ECO:0000318"/>
    <property type="project" value="GO_Central"/>
</dbReference>
<dbReference type="GO" id="GO:0000981">
    <property type="term" value="F:DNA-binding transcription factor activity, RNA polymerase II-specific"/>
    <property type="evidence" value="ECO:0000318"/>
    <property type="project" value="GO_Central"/>
</dbReference>
<dbReference type="GO" id="GO:0000978">
    <property type="term" value="F:RNA polymerase II cis-regulatory region sequence-specific DNA binding"/>
    <property type="evidence" value="ECO:0000318"/>
    <property type="project" value="GO_Central"/>
</dbReference>
<dbReference type="GO" id="GO:0060272">
    <property type="term" value="P:embryonic skeletal joint morphogenesis"/>
    <property type="evidence" value="ECO:0000318"/>
    <property type="project" value="GO_Central"/>
</dbReference>
<dbReference type="GO" id="GO:0006357">
    <property type="term" value="P:regulation of transcription by RNA polymerase II"/>
    <property type="evidence" value="ECO:0000318"/>
    <property type="project" value="GO_Central"/>
</dbReference>
<dbReference type="CDD" id="cd00086">
    <property type="entry name" value="homeodomain"/>
    <property type="match status" value="1"/>
</dbReference>
<dbReference type="FunFam" id="1.10.10.60:FF:000166">
    <property type="entry name" value="homeobox protein Hox-C11"/>
    <property type="match status" value="1"/>
</dbReference>
<dbReference type="Gene3D" id="1.10.10.60">
    <property type="entry name" value="Homeodomain-like"/>
    <property type="match status" value="1"/>
</dbReference>
<dbReference type="InterPro" id="IPR021918">
    <property type="entry name" value="DUF3528"/>
</dbReference>
<dbReference type="InterPro" id="IPR001356">
    <property type="entry name" value="HD"/>
</dbReference>
<dbReference type="InterPro" id="IPR020479">
    <property type="entry name" value="HD_metazoa"/>
</dbReference>
<dbReference type="InterPro" id="IPR017970">
    <property type="entry name" value="Homeobox_CS"/>
</dbReference>
<dbReference type="InterPro" id="IPR009057">
    <property type="entry name" value="Homeodomain-like_sf"/>
</dbReference>
<dbReference type="PANTHER" id="PTHR46092">
    <property type="entry name" value="HOMEOBOX PROTEIN HOX-A11-RELATED"/>
    <property type="match status" value="1"/>
</dbReference>
<dbReference type="PANTHER" id="PTHR46092:SF1">
    <property type="entry name" value="HOMEOBOX PROTEIN HOX-C11"/>
    <property type="match status" value="1"/>
</dbReference>
<dbReference type="Pfam" id="PF12045">
    <property type="entry name" value="DUF3528"/>
    <property type="match status" value="1"/>
</dbReference>
<dbReference type="Pfam" id="PF00046">
    <property type="entry name" value="Homeodomain"/>
    <property type="match status" value="1"/>
</dbReference>
<dbReference type="PRINTS" id="PR00024">
    <property type="entry name" value="HOMEOBOX"/>
</dbReference>
<dbReference type="SMART" id="SM00389">
    <property type="entry name" value="HOX"/>
    <property type="match status" value="1"/>
</dbReference>
<dbReference type="SUPFAM" id="SSF46689">
    <property type="entry name" value="Homeodomain-like"/>
    <property type="match status" value="1"/>
</dbReference>
<dbReference type="PROSITE" id="PS00027">
    <property type="entry name" value="HOMEOBOX_1"/>
    <property type="match status" value="1"/>
</dbReference>
<dbReference type="PROSITE" id="PS50071">
    <property type="entry name" value="HOMEOBOX_2"/>
    <property type="match status" value="1"/>
</dbReference>
<reference evidence="9" key="1">
    <citation type="submission" date="2005-03" db="EMBL/GenBank/DDBJ databases">
        <authorList>
            <consortium name="NIH - Zebrafish Gene Collection (ZGC) project"/>
        </authorList>
    </citation>
    <scope>NUCLEOTIDE SEQUENCE [LARGE SCALE MRNA]</scope>
    <source>
        <tissue evidence="9">Embryo</tissue>
    </source>
</reference>
<reference evidence="7 10" key="2">
    <citation type="journal article" date="2005" name="Evol. Dev.">
        <title>Genomic annotation and transcriptome analysis of the zebrafish (Danio rerio) hox complex with description of a novel member, hoxb13a.</title>
        <authorList>
            <person name="Corredor-Adamez M."/>
            <person name="Welten M.C.M."/>
            <person name="Spaink H.P."/>
            <person name="Jeffery J.E."/>
            <person name="Schoon R.T."/>
            <person name="de Bakker M.A.G."/>
            <person name="Bagowski C.P."/>
            <person name="Meijer A.H."/>
            <person name="Verbeek F.J."/>
            <person name="Richardson M.K."/>
        </authorList>
    </citation>
    <scope>NUCLEOTIDE SEQUENCE [MRNA] OF 69-289</scope>
    <source>
        <strain evidence="5">Tuebingen</strain>
    </source>
</reference>
<reference evidence="7 8" key="3">
    <citation type="journal article" date="1998" name="Science">
        <title>Zebrafish hox clusters and vertebrate genome evolution.</title>
        <authorList>
            <person name="Amores A."/>
            <person name="Force A."/>
            <person name="Yan Y.-L."/>
            <person name="Joly L."/>
            <person name="Amemiya C."/>
            <person name="Fritz A."/>
            <person name="Ho R.K."/>
            <person name="Langeland J."/>
            <person name="Prince V.E."/>
            <person name="Wang Y.-L."/>
            <person name="Westerfield M."/>
            <person name="Ekker M."/>
            <person name="Postlethwait J.H."/>
        </authorList>
    </citation>
    <scope>NUCLEOTIDE SEQUENCE [GENOMIC DNA] OF 234-305</scope>
</reference>
<reference evidence="7 11" key="4">
    <citation type="journal article" date="1998" name="Development">
        <title>Zebrafish hox genes: genomic organization and modified colinear expression patterns in the trunk.</title>
        <authorList>
            <person name="Prince V.E."/>
            <person name="Joly L."/>
            <person name="Ekker M."/>
            <person name="Ho R.K."/>
        </authorList>
    </citation>
    <scope>NUCLEOTIDE SEQUENCE [MRNA] OF 257-306</scope>
    <source>
        <tissue evidence="6">Embryo</tissue>
    </source>
</reference>
<organism>
    <name type="scientific">Danio rerio</name>
    <name type="common">Zebrafish</name>
    <name type="synonym">Brachydanio rerio</name>
    <dbReference type="NCBI Taxonomy" id="7955"/>
    <lineage>
        <taxon>Eukaryota</taxon>
        <taxon>Metazoa</taxon>
        <taxon>Chordata</taxon>
        <taxon>Craniata</taxon>
        <taxon>Vertebrata</taxon>
        <taxon>Euteleostomi</taxon>
        <taxon>Actinopterygii</taxon>
        <taxon>Neopterygii</taxon>
        <taxon>Teleostei</taxon>
        <taxon>Ostariophysi</taxon>
        <taxon>Cypriniformes</taxon>
        <taxon>Danionidae</taxon>
        <taxon>Danioninae</taxon>
        <taxon>Danio</taxon>
    </lineage>
</organism>
<feature type="chain" id="PRO_0000248836" description="Homeobox protein Hox-C11a">
    <location>
        <begin position="1"/>
        <end position="306"/>
    </location>
</feature>
<feature type="DNA-binding region" description="Homeobox" evidence="3">
    <location>
        <begin position="234"/>
        <end position="293"/>
    </location>
</feature>
<feature type="region of interest" description="Disordered" evidence="4">
    <location>
        <begin position="177"/>
        <end position="238"/>
    </location>
</feature>
<feature type="compositionally biased region" description="Polar residues" evidence="4">
    <location>
        <begin position="181"/>
        <end position="190"/>
    </location>
</feature>
<feature type="compositionally biased region" description="Polar residues" evidence="4">
    <location>
        <begin position="209"/>
        <end position="232"/>
    </location>
</feature>
<feature type="sequence conflict" description="In Ref. 4; CAA74876." evidence="7" ref="4">
    <original>I</original>
    <variation>M</variation>
    <location>
        <position position="259"/>
    </location>
</feature>
<feature type="sequence conflict" description="In Ref. 4; CAA74876." evidence="7" ref="4">
    <original>S</original>
    <variation>W</variation>
    <location>
        <position position="301"/>
    </location>
</feature>
<gene>
    <name evidence="9 12" type="primary">hoxc11a</name>
    <name type="ORF">zgc:110834</name>
</gene>
<comment type="function">
    <text evidence="1">Sequence-specific transcription factor which is part of a developmental regulatory system that provides cells with specific positional identities on the anterior-posterior axis.</text>
</comment>
<comment type="subcellular location">
    <subcellularLocation>
        <location evidence="1 3">Nucleus</location>
    </subcellularLocation>
</comment>
<comment type="similarity">
    <text evidence="2">Belongs to the Abd-B homeobox family.</text>
</comment>
<evidence type="ECO:0000250" key="1">
    <source>
        <dbReference type="UniProtKB" id="O43248"/>
    </source>
</evidence>
<evidence type="ECO:0000255" key="2"/>
<evidence type="ECO:0000255" key="3">
    <source>
        <dbReference type="PROSITE-ProRule" id="PRU00108"/>
    </source>
</evidence>
<evidence type="ECO:0000256" key="4">
    <source>
        <dbReference type="SAM" id="MobiDB-lite"/>
    </source>
</evidence>
<evidence type="ECO:0000269" key="5">
    <source>
    </source>
</evidence>
<evidence type="ECO:0000269" key="6">
    <source>
    </source>
</evidence>
<evidence type="ECO:0000305" key="7"/>
<evidence type="ECO:0000312" key="8">
    <source>
        <dbReference type="EMBL" id="AAD15951.1"/>
    </source>
</evidence>
<evidence type="ECO:0000312" key="9">
    <source>
        <dbReference type="EMBL" id="AAH91858.1"/>
    </source>
</evidence>
<evidence type="ECO:0000312" key="10">
    <source>
        <dbReference type="EMBL" id="AAY67936.1"/>
    </source>
</evidence>
<evidence type="ECO:0000312" key="11">
    <source>
        <dbReference type="EMBL" id="CAA74876.1"/>
    </source>
</evidence>
<evidence type="ECO:0000312" key="12">
    <source>
        <dbReference type="ZFIN" id="ZDB-GENE-990415-111"/>
    </source>
</evidence>
<protein>
    <recommendedName>
        <fullName>Homeobox protein Hox-C11a</fullName>
    </recommendedName>
</protein>
<name>HXCBA_DANRE</name>